<evidence type="ECO:0000250" key="1"/>
<evidence type="ECO:0000269" key="2">
    <source>
    </source>
</evidence>
<evidence type="ECO:0000269" key="3">
    <source>
    </source>
</evidence>
<evidence type="ECO:0000305" key="4"/>
<keyword id="KW-0010">Activator</keyword>
<keyword id="KW-0217">Developmental protein</keyword>
<keyword id="KW-0221">Differentiation</keyword>
<keyword id="KW-0524">Neurogenesis</keyword>
<keyword id="KW-0539">Nucleus</keyword>
<keyword id="KW-1185">Reference proteome</keyword>
<keyword id="KW-0677">Repeat</keyword>
<keyword id="KW-0804">Transcription</keyword>
<keyword id="KW-0805">Transcription regulation</keyword>
<accession>Q2PW47</accession>
<accession>Q6NUW0</accession>
<dbReference type="EMBL" id="DQ300265">
    <property type="protein sequence ID" value="ABC17786.1"/>
    <property type="molecule type" value="mRNA"/>
</dbReference>
<dbReference type="EMBL" id="BC068408">
    <property type="protein sequence ID" value="AAH68408.1"/>
    <property type="molecule type" value="mRNA"/>
</dbReference>
<dbReference type="RefSeq" id="NP_001034151.1">
    <property type="nucleotide sequence ID" value="NM_001039062.1"/>
</dbReference>
<dbReference type="RefSeq" id="XP_009304761.1">
    <property type="nucleotide sequence ID" value="XM_009306486.4"/>
</dbReference>
<dbReference type="SMR" id="Q2PW47"/>
<dbReference type="FunCoup" id="Q2PW47">
    <property type="interactions" value="1867"/>
</dbReference>
<dbReference type="STRING" id="7955.ENSDARP00000132097"/>
<dbReference type="PaxDb" id="7955-ENSDARP00000097153"/>
<dbReference type="Ensembl" id="ENSDART00000157919">
    <property type="protein sequence ID" value="ENSDARP00000132097"/>
    <property type="gene ID" value="ENSDARG00000099431"/>
</dbReference>
<dbReference type="GeneID" id="323621"/>
<dbReference type="KEGG" id="dre:323621"/>
<dbReference type="AGR" id="ZFIN:ZDB-GENE-030131-2341"/>
<dbReference type="CTD" id="9862"/>
<dbReference type="ZFIN" id="ZDB-GENE-030131-2341">
    <property type="gene designation" value="med24"/>
</dbReference>
<dbReference type="eggNOG" id="ENOG502QPJD">
    <property type="taxonomic scope" value="Eukaryota"/>
</dbReference>
<dbReference type="HOGENOM" id="CLU_007484_0_0_1"/>
<dbReference type="InParanoid" id="Q2PW47"/>
<dbReference type="OMA" id="RWSDSQW"/>
<dbReference type="OrthoDB" id="21216at2759"/>
<dbReference type="PhylomeDB" id="Q2PW47"/>
<dbReference type="PRO" id="PR:Q2PW47"/>
<dbReference type="Proteomes" id="UP000000437">
    <property type="component" value="Chromosome 12"/>
</dbReference>
<dbReference type="Bgee" id="ENSDARG00000099431">
    <property type="expression patterns" value="Expressed in mature ovarian follicle and 33 other cell types or tissues"/>
</dbReference>
<dbReference type="GO" id="GO:0016592">
    <property type="term" value="C:mediator complex"/>
    <property type="evidence" value="ECO:0000318"/>
    <property type="project" value="GO_Central"/>
</dbReference>
<dbReference type="GO" id="GO:0003712">
    <property type="term" value="F:transcription coregulator activity"/>
    <property type="evidence" value="ECO:0000318"/>
    <property type="project" value="GO_Central"/>
</dbReference>
<dbReference type="GO" id="GO:0048484">
    <property type="term" value="P:enteric nervous system development"/>
    <property type="evidence" value="ECO:0000315"/>
    <property type="project" value="ZFIN"/>
</dbReference>
<dbReference type="GO" id="GO:0061453">
    <property type="term" value="P:interstitial cell of Cajal differentiation"/>
    <property type="evidence" value="ECO:0000315"/>
    <property type="project" value="ZFIN"/>
</dbReference>
<dbReference type="GO" id="GO:0060261">
    <property type="term" value="P:positive regulation of transcription initiation by RNA polymerase II"/>
    <property type="evidence" value="ECO:0000318"/>
    <property type="project" value="GO_Central"/>
</dbReference>
<dbReference type="GO" id="GO:0046549">
    <property type="term" value="P:retinal cone cell development"/>
    <property type="evidence" value="ECO:0000315"/>
    <property type="project" value="ZFIN"/>
</dbReference>
<dbReference type="GO" id="GO:0048538">
    <property type="term" value="P:thymus development"/>
    <property type="evidence" value="ECO:0000315"/>
    <property type="project" value="ZFIN"/>
</dbReference>
<dbReference type="InterPro" id="IPR021429">
    <property type="entry name" value="Mediator_Med24"/>
</dbReference>
<dbReference type="PANTHER" id="PTHR12898">
    <property type="entry name" value="MEDIATOR OF RNA POLYMERASE II TRANSCRIPTION SUBUNIT 24"/>
    <property type="match status" value="1"/>
</dbReference>
<dbReference type="PANTHER" id="PTHR12898:SF1">
    <property type="entry name" value="MEDIATOR OF RNA POLYMERASE II TRANSCRIPTION SUBUNIT 24"/>
    <property type="match status" value="1"/>
</dbReference>
<dbReference type="Pfam" id="PF11277">
    <property type="entry name" value="Med24_N"/>
    <property type="match status" value="1"/>
</dbReference>
<proteinExistence type="evidence at transcript level"/>
<gene>
    <name type="primary">med24</name>
    <name type="synonym">lsn</name>
    <name type="synonym">thrap4</name>
    <name type="synonym">trap100</name>
</gene>
<sequence length="989" mass="110862">MKVVNLKQAILQAWKERWSDYQWAINIKKNCPKGATWDYLNLAEALLEQAMIGPSPNPLILSYLKYAISSQMVSYSSVLTAISKFDDFSRELCVKSLLEIMDMFSNRLSCHGKAEECIGLCRAMLCTVVWLLQGCAWYCERLRDPNDFSALESSLRACLERMANLLHSTKNRALVHIARLEEQASWTNVEQAVLKLTENLSAVTNPTLKESLEECVSLVKSIPQMLCLQCDPPVHTTFPSVHAFIMLEGTMNLTGETQPLVEQLMMIKRMQRIPAPLFVLEIWKACFTGLIESPEGNEELKWTAFTFLKIPQVLLRLKKYPQGEKTQDFTEDVNVAFEYLLNLTPLLDKADQRCNCDCLSLLLQECNKLGLLSEANTATLTAKRSEDREHAPRLKTAENANIQPNPGLILRAEPTVTNILKTVDADHSKSPEGLLGVLGHMLSGKSLDLLLAAAAATGKLKSFARKFIKLNEFPKHISGEGSKSASVRALLFDISFLMLCHVVQTYGSEVILSDPSPSSETPFFETWLQTCMPEEGKTLNPDHPCFRPESGKVESLVALLNSSSEMKLVQMKWHEICLSTPAAILEVLNAWENGVLSVEAVQKITDNIKGKVCSMAICAVAWLVAHVRMLGLDEREKPQTMIRQLMTPMSGENTLQFYHERVVIMSSILEHMCADVFQQTGLSLRPAVEGQEPIPYRNLLPARLPIRQALQSQFRKVLEKGWVDSHAFHLFENLLHMGGVFWFTNNLVKELLKETRKEWASRVVELLYSIFCLDTQQITLTLLGHILPRLLTDPAHWHSLADPPGRALAKLSVWCALSSYSSHHKGQASARQRKRHREDIEDYTSLFPLDDTQPSKLMRLLSSNEDENSMLSSPGDRSISSSLSASQLHTVNMRDPLNRVLANLFLLISSQLGSKTAGPHTQFVQSFVEECVDCSEQGSRSSILQFMPFTMISELVKLQSLAKPKTVLSITDLSLPLGRRMAAKAIAAL</sequence>
<comment type="function">
    <text evidence="1 2 3">Component of the Mediator complex, a coactivator involved in the regulated transcription of nearly all RNA polymerase II-dependent genes. Mediator functions as a bridge to convey information from gene-specific regulatory proteins to the basal RNA polymerase II transcription machinery. Mediator is recruited to promoters by direct interactions with regulatory proteins and serves as a scaffold for the assembly of a functional preinitiation complex with RNA polymerase II and the general transcription factors (By similarity). Required for proliferation of enteric nervous system precursors. Required for the development of dopaminergic amacrine cells and rod photoreceptor cells in the retina.</text>
</comment>
<comment type="subunit">
    <text evidence="1">Component of the Mediator complex.</text>
</comment>
<comment type="subcellular location">
    <subcellularLocation>
        <location evidence="4">Nucleus</location>
    </subcellularLocation>
</comment>
<comment type="developmental stage">
    <text evidence="2">Maternally expressed. Ubiquitously expressed through the 10 somite stage. Expression subsequently decreases in the trunk and tail while remaining high in anterior parts of the embryo. By 24 hours post-fertilization (hpf) expression is no longer detectable in the trunk and tail, but is maintained in anterior parts of the embryo. At 48 hpf expression extends along almost the entire length of the gut and is particularly high in the dorsal forebrain, ventral midbrain, and the dorsal posterior part of the midbrain. At 60 hpf, expression in the gut is restricted to intestinal epithelial cells. At 72 hpf, expression in the CNS is limited to cells in the diencephalon, the ventral midbrain and the dorsal part of the midbrain, while expression outside the CNS is restricted to the pharyngeal endoderm. Expression in the pharyngeal endoderm persists through 96 hpf.</text>
</comment>
<comment type="similarity">
    <text evidence="4">Belongs to the Mediator complex subunit 24 family.</text>
</comment>
<reference key="1">
    <citation type="journal article" date="2006" name="Development">
        <title>Lessen encodes a zebrafish trap100 required for enteric nervous system development.</title>
        <authorList>
            <person name="Pietsch J."/>
            <person name="Delalande J.-M."/>
            <person name="Jakaitis B."/>
            <person name="Stensby J.D."/>
            <person name="Dohle S."/>
            <person name="Talbot W.S."/>
            <person name="Raible D.W."/>
            <person name="Shepherd I.T."/>
        </authorList>
    </citation>
    <scope>NUCLEOTIDE SEQUENCE [MRNA]</scope>
    <scope>FUNCTION</scope>
    <scope>DEVELOPMENTAL STAGE</scope>
</reference>
<reference key="2">
    <citation type="submission" date="2004-04" db="EMBL/GenBank/DDBJ databases">
        <authorList>
            <consortium name="NIH - Zebrafish Gene Collection (ZGC) project"/>
        </authorList>
    </citation>
    <scope>NUCLEOTIDE SEQUENCE [LARGE SCALE MRNA] OF 6-989</scope>
    <source>
        <tissue>Pharyngula</tissue>
    </source>
</reference>
<reference key="3">
    <citation type="journal article" date="2006" name="Genetics">
        <title>Differential roles of transcriptional mediator complex subunits Crsp34/Med27, Crsp150/Med14 and Trap100/Med24 during zebrafish retinal development.</title>
        <authorList>
            <person name="Duerr K."/>
            <person name="Holzschuh J."/>
            <person name="Filippi A."/>
            <person name="Ettl A.-K."/>
            <person name="Ryu S."/>
            <person name="Shepherd I.T."/>
            <person name="Driever W."/>
        </authorList>
    </citation>
    <scope>FUNCTION</scope>
</reference>
<name>MED24_DANRE</name>
<feature type="chain" id="PRO_0000305915" description="Mediator of RNA polymerase II transcription subunit 24">
    <location>
        <begin position="1"/>
        <end position="989"/>
    </location>
</feature>
<feature type="short sequence motif" description="LXXLL motif 1">
    <location>
        <begin position="343"/>
        <end position="347"/>
    </location>
</feature>
<feature type="short sequence motif" description="LXXLL motif 2">
    <location>
        <begin position="359"/>
        <end position="363"/>
    </location>
</feature>
<feature type="short sequence motif" description="LXXLL motif 3">
    <location>
        <begin position="447"/>
        <end position="451"/>
    </location>
</feature>
<feature type="short sequence motif" description="LXXLL motif 4">
    <location>
        <begin position="556"/>
        <end position="560"/>
    </location>
</feature>
<feature type="short sequence motif" description="LXXLL motif 5">
    <location>
        <begin position="787"/>
        <end position="791"/>
    </location>
</feature>
<feature type="short sequence motif" description="LXXLL motif 6">
    <location>
        <begin position="857"/>
        <end position="861"/>
    </location>
</feature>
<feature type="sequence conflict" description="In Ref. 1; ABC17786." evidence="4" ref="1">
    <original>E</original>
    <variation>G</variation>
    <location>
        <position position="281"/>
    </location>
</feature>
<protein>
    <recommendedName>
        <fullName>Mediator of RNA polymerase II transcription subunit 24</fullName>
    </recommendedName>
    <alternativeName>
        <fullName>Mediator complex subunit 24</fullName>
    </alternativeName>
    <alternativeName>
        <fullName>Protein lessen</fullName>
    </alternativeName>
    <alternativeName>
        <fullName>Thyroid hormone receptor-associated protein 4 homolog</fullName>
    </alternativeName>
    <alternativeName>
        <fullName>Trap100 homolog</fullName>
    </alternativeName>
</protein>
<organism>
    <name type="scientific">Danio rerio</name>
    <name type="common">Zebrafish</name>
    <name type="synonym">Brachydanio rerio</name>
    <dbReference type="NCBI Taxonomy" id="7955"/>
    <lineage>
        <taxon>Eukaryota</taxon>
        <taxon>Metazoa</taxon>
        <taxon>Chordata</taxon>
        <taxon>Craniata</taxon>
        <taxon>Vertebrata</taxon>
        <taxon>Euteleostomi</taxon>
        <taxon>Actinopterygii</taxon>
        <taxon>Neopterygii</taxon>
        <taxon>Teleostei</taxon>
        <taxon>Ostariophysi</taxon>
        <taxon>Cypriniformes</taxon>
        <taxon>Danionidae</taxon>
        <taxon>Danioninae</taxon>
        <taxon>Danio</taxon>
    </lineage>
</organism>